<accession>C1CAM7</accession>
<protein>
    <recommendedName>
        <fullName evidence="1">Large ribosomal subunit protein uL6</fullName>
    </recommendedName>
    <alternativeName>
        <fullName evidence="2">50S ribosomal protein L6</fullName>
    </alternativeName>
</protein>
<keyword id="KW-0687">Ribonucleoprotein</keyword>
<keyword id="KW-0689">Ribosomal protein</keyword>
<keyword id="KW-0694">RNA-binding</keyword>
<keyword id="KW-0699">rRNA-binding</keyword>
<feature type="chain" id="PRO_1000166831" description="Large ribosomal subunit protein uL6">
    <location>
        <begin position="1"/>
        <end position="178"/>
    </location>
</feature>
<sequence length="178" mass="19441">MSRIGNKVIVLPAGVELANNDNVVTVKGPKGELTREFSKDIEIRVEGTEVTLHRPNDSKEMKTIHGTTRALLNNMVVGVSEGFKKELEMRGVGYRAQLQGSKLVLAVGKSHPDEVEAPEGITFELPNPTTIVVSGISKEVVGQTAAYVRSLRSPEPYKGKGIRYIGEFVRRKEGKTGK</sequence>
<gene>
    <name evidence="1" type="primary">rplF</name>
    <name type="ordered locus">SP70585_0280</name>
</gene>
<reference key="1">
    <citation type="journal article" date="2010" name="Genome Biol.">
        <title>Structure and dynamics of the pan-genome of Streptococcus pneumoniae and closely related species.</title>
        <authorList>
            <person name="Donati C."/>
            <person name="Hiller N.L."/>
            <person name="Tettelin H."/>
            <person name="Muzzi A."/>
            <person name="Croucher N.J."/>
            <person name="Angiuoli S.V."/>
            <person name="Oggioni M."/>
            <person name="Dunning Hotopp J.C."/>
            <person name="Hu F.Z."/>
            <person name="Riley D.R."/>
            <person name="Covacci A."/>
            <person name="Mitchell T.J."/>
            <person name="Bentley S.D."/>
            <person name="Kilian M."/>
            <person name="Ehrlich G.D."/>
            <person name="Rappuoli R."/>
            <person name="Moxon E.R."/>
            <person name="Masignani V."/>
        </authorList>
    </citation>
    <scope>NUCLEOTIDE SEQUENCE [LARGE SCALE GENOMIC DNA]</scope>
    <source>
        <strain>70585</strain>
    </source>
</reference>
<comment type="function">
    <text evidence="1">This protein binds to the 23S rRNA, and is important in its secondary structure. It is located near the subunit interface in the base of the L7/L12 stalk, and near the tRNA binding site of the peptidyltransferase center.</text>
</comment>
<comment type="subunit">
    <text evidence="1">Part of the 50S ribosomal subunit.</text>
</comment>
<comment type="similarity">
    <text evidence="1">Belongs to the universal ribosomal protein uL6 family.</text>
</comment>
<name>RL6_STRP7</name>
<proteinExistence type="inferred from homology"/>
<organism>
    <name type="scientific">Streptococcus pneumoniae (strain 70585)</name>
    <dbReference type="NCBI Taxonomy" id="488221"/>
    <lineage>
        <taxon>Bacteria</taxon>
        <taxon>Bacillati</taxon>
        <taxon>Bacillota</taxon>
        <taxon>Bacilli</taxon>
        <taxon>Lactobacillales</taxon>
        <taxon>Streptococcaceae</taxon>
        <taxon>Streptococcus</taxon>
    </lineage>
</organism>
<dbReference type="EMBL" id="CP000918">
    <property type="protein sequence ID" value="ACO16188.1"/>
    <property type="molecule type" value="Genomic_DNA"/>
</dbReference>
<dbReference type="RefSeq" id="WP_000086632.1">
    <property type="nucleotide sequence ID" value="NC_012468.1"/>
</dbReference>
<dbReference type="SMR" id="C1CAM7"/>
<dbReference type="KEGG" id="snm:SP70585_0280"/>
<dbReference type="HOGENOM" id="CLU_065464_1_2_9"/>
<dbReference type="Proteomes" id="UP000002211">
    <property type="component" value="Chromosome"/>
</dbReference>
<dbReference type="GO" id="GO:0022625">
    <property type="term" value="C:cytosolic large ribosomal subunit"/>
    <property type="evidence" value="ECO:0007669"/>
    <property type="project" value="TreeGrafter"/>
</dbReference>
<dbReference type="GO" id="GO:0019843">
    <property type="term" value="F:rRNA binding"/>
    <property type="evidence" value="ECO:0007669"/>
    <property type="project" value="UniProtKB-UniRule"/>
</dbReference>
<dbReference type="GO" id="GO:0003735">
    <property type="term" value="F:structural constituent of ribosome"/>
    <property type="evidence" value="ECO:0007669"/>
    <property type="project" value="InterPro"/>
</dbReference>
<dbReference type="GO" id="GO:0002181">
    <property type="term" value="P:cytoplasmic translation"/>
    <property type="evidence" value="ECO:0007669"/>
    <property type="project" value="TreeGrafter"/>
</dbReference>
<dbReference type="FunFam" id="3.90.930.12:FF:000001">
    <property type="entry name" value="50S ribosomal protein L6"/>
    <property type="match status" value="1"/>
</dbReference>
<dbReference type="FunFam" id="3.90.930.12:FF:000002">
    <property type="entry name" value="50S ribosomal protein L6"/>
    <property type="match status" value="1"/>
</dbReference>
<dbReference type="Gene3D" id="3.90.930.12">
    <property type="entry name" value="Ribosomal protein L6, alpha-beta domain"/>
    <property type="match status" value="2"/>
</dbReference>
<dbReference type="HAMAP" id="MF_01365_B">
    <property type="entry name" value="Ribosomal_uL6_B"/>
    <property type="match status" value="1"/>
</dbReference>
<dbReference type="InterPro" id="IPR000702">
    <property type="entry name" value="Ribosomal_uL6-like"/>
</dbReference>
<dbReference type="InterPro" id="IPR036789">
    <property type="entry name" value="Ribosomal_uL6-like_a/b-dom_sf"/>
</dbReference>
<dbReference type="InterPro" id="IPR020040">
    <property type="entry name" value="Ribosomal_uL6_a/b-dom"/>
</dbReference>
<dbReference type="InterPro" id="IPR019906">
    <property type="entry name" value="Ribosomal_uL6_bac-type"/>
</dbReference>
<dbReference type="InterPro" id="IPR002358">
    <property type="entry name" value="Ribosomal_uL6_CS"/>
</dbReference>
<dbReference type="NCBIfam" id="TIGR03654">
    <property type="entry name" value="L6_bact"/>
    <property type="match status" value="1"/>
</dbReference>
<dbReference type="PANTHER" id="PTHR11655">
    <property type="entry name" value="60S/50S RIBOSOMAL PROTEIN L6/L9"/>
    <property type="match status" value="1"/>
</dbReference>
<dbReference type="PANTHER" id="PTHR11655:SF14">
    <property type="entry name" value="LARGE RIBOSOMAL SUBUNIT PROTEIN UL6M"/>
    <property type="match status" value="1"/>
</dbReference>
<dbReference type="Pfam" id="PF00347">
    <property type="entry name" value="Ribosomal_L6"/>
    <property type="match status" value="2"/>
</dbReference>
<dbReference type="PIRSF" id="PIRSF002162">
    <property type="entry name" value="Ribosomal_L6"/>
    <property type="match status" value="1"/>
</dbReference>
<dbReference type="PRINTS" id="PR00059">
    <property type="entry name" value="RIBOSOMALL6"/>
</dbReference>
<dbReference type="SUPFAM" id="SSF56053">
    <property type="entry name" value="Ribosomal protein L6"/>
    <property type="match status" value="2"/>
</dbReference>
<dbReference type="PROSITE" id="PS00525">
    <property type="entry name" value="RIBOSOMAL_L6_1"/>
    <property type="match status" value="1"/>
</dbReference>
<evidence type="ECO:0000255" key="1">
    <source>
        <dbReference type="HAMAP-Rule" id="MF_01365"/>
    </source>
</evidence>
<evidence type="ECO:0000305" key="2"/>